<protein>
    <recommendedName>
        <fullName>SPbeta prophage-derived uncharacterized protein YonC</fullName>
    </recommendedName>
</protein>
<keyword id="KW-1185">Reference proteome</keyword>
<accession>O31955</accession>
<sequence length="178" mass="19609">MATRLQKALTEVGNHTTGNLNSLKIKTVAHGAKVTGSDIDNFMLVELGFDAEGNRTASKLSDKTKKAYLIASPEARYLGESMRDFYNGVGEHARIVILEPAYTRFDVSAFSFNTGVTEVKQGQVAHFDIATQKYILSDPTSPHEDYADSSAKFLVVNNEDDLVYTMGQKLVRLEVIEA</sequence>
<feature type="chain" id="PRO_0000360605" description="SPbeta prophage-derived uncharacterized protein YonC">
    <location>
        <begin position="1"/>
        <end position="178"/>
    </location>
</feature>
<reference key="1">
    <citation type="journal article" date="1997" name="Nature">
        <title>The complete genome sequence of the Gram-positive bacterium Bacillus subtilis.</title>
        <authorList>
            <person name="Kunst F."/>
            <person name="Ogasawara N."/>
            <person name="Moszer I."/>
            <person name="Albertini A.M."/>
            <person name="Alloni G."/>
            <person name="Azevedo V."/>
            <person name="Bertero M.G."/>
            <person name="Bessieres P."/>
            <person name="Bolotin A."/>
            <person name="Borchert S."/>
            <person name="Borriss R."/>
            <person name="Boursier L."/>
            <person name="Brans A."/>
            <person name="Braun M."/>
            <person name="Brignell S.C."/>
            <person name="Bron S."/>
            <person name="Brouillet S."/>
            <person name="Bruschi C.V."/>
            <person name="Caldwell B."/>
            <person name="Capuano V."/>
            <person name="Carter N.M."/>
            <person name="Choi S.-K."/>
            <person name="Codani J.-J."/>
            <person name="Connerton I.F."/>
            <person name="Cummings N.J."/>
            <person name="Daniel R.A."/>
            <person name="Denizot F."/>
            <person name="Devine K.M."/>
            <person name="Duesterhoeft A."/>
            <person name="Ehrlich S.D."/>
            <person name="Emmerson P.T."/>
            <person name="Entian K.-D."/>
            <person name="Errington J."/>
            <person name="Fabret C."/>
            <person name="Ferrari E."/>
            <person name="Foulger D."/>
            <person name="Fritz C."/>
            <person name="Fujita M."/>
            <person name="Fujita Y."/>
            <person name="Fuma S."/>
            <person name="Galizzi A."/>
            <person name="Galleron N."/>
            <person name="Ghim S.-Y."/>
            <person name="Glaser P."/>
            <person name="Goffeau A."/>
            <person name="Golightly E.J."/>
            <person name="Grandi G."/>
            <person name="Guiseppi G."/>
            <person name="Guy B.J."/>
            <person name="Haga K."/>
            <person name="Haiech J."/>
            <person name="Harwood C.R."/>
            <person name="Henaut A."/>
            <person name="Hilbert H."/>
            <person name="Holsappel S."/>
            <person name="Hosono S."/>
            <person name="Hullo M.-F."/>
            <person name="Itaya M."/>
            <person name="Jones L.-M."/>
            <person name="Joris B."/>
            <person name="Karamata D."/>
            <person name="Kasahara Y."/>
            <person name="Klaerr-Blanchard M."/>
            <person name="Klein C."/>
            <person name="Kobayashi Y."/>
            <person name="Koetter P."/>
            <person name="Koningstein G."/>
            <person name="Krogh S."/>
            <person name="Kumano M."/>
            <person name="Kurita K."/>
            <person name="Lapidus A."/>
            <person name="Lardinois S."/>
            <person name="Lauber J."/>
            <person name="Lazarevic V."/>
            <person name="Lee S.-M."/>
            <person name="Levine A."/>
            <person name="Liu H."/>
            <person name="Masuda S."/>
            <person name="Mauel C."/>
            <person name="Medigue C."/>
            <person name="Medina N."/>
            <person name="Mellado R.P."/>
            <person name="Mizuno M."/>
            <person name="Moestl D."/>
            <person name="Nakai S."/>
            <person name="Noback M."/>
            <person name="Noone D."/>
            <person name="O'Reilly M."/>
            <person name="Ogawa K."/>
            <person name="Ogiwara A."/>
            <person name="Oudega B."/>
            <person name="Park S.-H."/>
            <person name="Parro V."/>
            <person name="Pohl T.M."/>
            <person name="Portetelle D."/>
            <person name="Porwollik S."/>
            <person name="Prescott A.M."/>
            <person name="Presecan E."/>
            <person name="Pujic P."/>
            <person name="Purnelle B."/>
            <person name="Rapoport G."/>
            <person name="Rey M."/>
            <person name="Reynolds S."/>
            <person name="Rieger M."/>
            <person name="Rivolta C."/>
            <person name="Rocha E."/>
            <person name="Roche B."/>
            <person name="Rose M."/>
            <person name="Sadaie Y."/>
            <person name="Sato T."/>
            <person name="Scanlan E."/>
            <person name="Schleich S."/>
            <person name="Schroeter R."/>
            <person name="Scoffone F."/>
            <person name="Sekiguchi J."/>
            <person name="Sekowska A."/>
            <person name="Seror S.J."/>
            <person name="Serror P."/>
            <person name="Shin B.-S."/>
            <person name="Soldo B."/>
            <person name="Sorokin A."/>
            <person name="Tacconi E."/>
            <person name="Takagi T."/>
            <person name="Takahashi H."/>
            <person name="Takemaru K."/>
            <person name="Takeuchi M."/>
            <person name="Tamakoshi A."/>
            <person name="Tanaka T."/>
            <person name="Terpstra P."/>
            <person name="Tognoni A."/>
            <person name="Tosato V."/>
            <person name="Uchiyama S."/>
            <person name="Vandenbol M."/>
            <person name="Vannier F."/>
            <person name="Vassarotti A."/>
            <person name="Viari A."/>
            <person name="Wambutt R."/>
            <person name="Wedler E."/>
            <person name="Wedler H."/>
            <person name="Weitzenegger T."/>
            <person name="Winters P."/>
            <person name="Wipat A."/>
            <person name="Yamamoto H."/>
            <person name="Yamane K."/>
            <person name="Yasumoto K."/>
            <person name="Yata K."/>
            <person name="Yoshida K."/>
            <person name="Yoshikawa H.-F."/>
            <person name="Zumstein E."/>
            <person name="Yoshikawa H."/>
            <person name="Danchin A."/>
        </authorList>
    </citation>
    <scope>NUCLEOTIDE SEQUENCE [LARGE SCALE GENOMIC DNA]</scope>
    <source>
        <strain>168</strain>
    </source>
</reference>
<gene>
    <name type="primary">yonC</name>
    <name type="ordered locus">BSU21140</name>
</gene>
<proteinExistence type="predicted"/>
<name>YONC_BACSU</name>
<organism>
    <name type="scientific">Bacillus subtilis (strain 168)</name>
    <dbReference type="NCBI Taxonomy" id="224308"/>
    <lineage>
        <taxon>Bacteria</taxon>
        <taxon>Bacillati</taxon>
        <taxon>Bacillota</taxon>
        <taxon>Bacilli</taxon>
        <taxon>Bacillales</taxon>
        <taxon>Bacillaceae</taxon>
        <taxon>Bacillus</taxon>
    </lineage>
</organism>
<dbReference type="EMBL" id="AL009126">
    <property type="protein sequence ID" value="CAB14032.1"/>
    <property type="molecule type" value="Genomic_DNA"/>
</dbReference>
<dbReference type="RefSeq" id="NP_389997.1">
    <property type="nucleotide sequence ID" value="NC_000964.3"/>
</dbReference>
<dbReference type="RefSeq" id="WP_004399581.1">
    <property type="nucleotide sequence ID" value="NZ_OZ025638.1"/>
</dbReference>
<dbReference type="FunCoup" id="O31955">
    <property type="interactions" value="58"/>
</dbReference>
<dbReference type="STRING" id="224308.BSU21140"/>
<dbReference type="PaxDb" id="224308-BSU21140"/>
<dbReference type="EnsemblBacteria" id="CAB14032">
    <property type="protein sequence ID" value="CAB14032"/>
    <property type="gene ID" value="BSU_21140"/>
</dbReference>
<dbReference type="GeneID" id="939157"/>
<dbReference type="KEGG" id="bsu:BSU21140"/>
<dbReference type="PATRIC" id="fig|224308.179.peg.2308"/>
<dbReference type="eggNOG" id="ENOG5030DW9">
    <property type="taxonomic scope" value="Bacteria"/>
</dbReference>
<dbReference type="InParanoid" id="O31955"/>
<dbReference type="OrthoDB" id="2905087at2"/>
<dbReference type="BioCyc" id="BSUB:BSU21140-MONOMER"/>
<dbReference type="Proteomes" id="UP000001570">
    <property type="component" value="Chromosome"/>
</dbReference>